<proteinExistence type="inferred from homology"/>
<comment type="function">
    <text evidence="1">Catalyzes the formation of 6,7-dimethyl-8-ribityllumazine by condensation of 5-amino-6-(D-ribitylamino)uracil with 3,4-dihydroxy-2-butanone 4-phosphate. This is the penultimate step in the biosynthesis of riboflavin.</text>
</comment>
<comment type="catalytic activity">
    <reaction evidence="1">
        <text>(2S)-2-hydroxy-3-oxobutyl phosphate + 5-amino-6-(D-ribitylamino)uracil = 6,7-dimethyl-8-(1-D-ribityl)lumazine + phosphate + 2 H2O + H(+)</text>
        <dbReference type="Rhea" id="RHEA:26152"/>
        <dbReference type="ChEBI" id="CHEBI:15377"/>
        <dbReference type="ChEBI" id="CHEBI:15378"/>
        <dbReference type="ChEBI" id="CHEBI:15934"/>
        <dbReference type="ChEBI" id="CHEBI:43474"/>
        <dbReference type="ChEBI" id="CHEBI:58201"/>
        <dbReference type="ChEBI" id="CHEBI:58830"/>
        <dbReference type="EC" id="2.5.1.78"/>
    </reaction>
</comment>
<comment type="pathway">
    <text evidence="1">Cofactor biosynthesis; riboflavin biosynthesis; riboflavin from 2-hydroxy-3-oxobutyl phosphate and 5-amino-6-(D-ribitylamino)uracil: step 1/2.</text>
</comment>
<comment type="subunit">
    <text evidence="1">Forms an icosahedral capsid composed of 60 subunits, arranged as a dodecamer of pentamers.</text>
</comment>
<comment type="similarity">
    <text evidence="1">Belongs to the DMRL synthase family.</text>
</comment>
<keyword id="KW-0686">Riboflavin biosynthesis</keyword>
<keyword id="KW-0808">Transferase</keyword>
<dbReference type="EC" id="2.5.1.78" evidence="1"/>
<dbReference type="EMBL" id="CP000057">
    <property type="protein sequence ID" value="AAX88415.1"/>
    <property type="molecule type" value="Genomic_DNA"/>
</dbReference>
<dbReference type="SMR" id="Q4QKN2"/>
<dbReference type="KEGG" id="hit:NTHI1616"/>
<dbReference type="HOGENOM" id="CLU_089358_1_1_6"/>
<dbReference type="UniPathway" id="UPA00275">
    <property type="reaction ID" value="UER00404"/>
</dbReference>
<dbReference type="Proteomes" id="UP000002525">
    <property type="component" value="Chromosome"/>
</dbReference>
<dbReference type="GO" id="GO:0005829">
    <property type="term" value="C:cytosol"/>
    <property type="evidence" value="ECO:0007669"/>
    <property type="project" value="TreeGrafter"/>
</dbReference>
<dbReference type="GO" id="GO:0009349">
    <property type="term" value="C:riboflavin synthase complex"/>
    <property type="evidence" value="ECO:0007669"/>
    <property type="project" value="InterPro"/>
</dbReference>
<dbReference type="GO" id="GO:0000906">
    <property type="term" value="F:6,7-dimethyl-8-ribityllumazine synthase activity"/>
    <property type="evidence" value="ECO:0007669"/>
    <property type="project" value="UniProtKB-UniRule"/>
</dbReference>
<dbReference type="GO" id="GO:0009231">
    <property type="term" value="P:riboflavin biosynthetic process"/>
    <property type="evidence" value="ECO:0007669"/>
    <property type="project" value="UniProtKB-UniRule"/>
</dbReference>
<dbReference type="CDD" id="cd09209">
    <property type="entry name" value="Lumazine_synthase-I"/>
    <property type="match status" value="1"/>
</dbReference>
<dbReference type="FunFam" id="3.40.50.960:FF:000001">
    <property type="entry name" value="6,7-dimethyl-8-ribityllumazine synthase"/>
    <property type="match status" value="1"/>
</dbReference>
<dbReference type="Gene3D" id="3.40.50.960">
    <property type="entry name" value="Lumazine/riboflavin synthase"/>
    <property type="match status" value="1"/>
</dbReference>
<dbReference type="HAMAP" id="MF_00178">
    <property type="entry name" value="Lumazine_synth"/>
    <property type="match status" value="1"/>
</dbReference>
<dbReference type="InterPro" id="IPR034964">
    <property type="entry name" value="LS"/>
</dbReference>
<dbReference type="InterPro" id="IPR002180">
    <property type="entry name" value="LS/RS"/>
</dbReference>
<dbReference type="InterPro" id="IPR036467">
    <property type="entry name" value="LS/RS_sf"/>
</dbReference>
<dbReference type="NCBIfam" id="TIGR00114">
    <property type="entry name" value="lumazine-synth"/>
    <property type="match status" value="1"/>
</dbReference>
<dbReference type="NCBIfam" id="NF000812">
    <property type="entry name" value="PRK00061.1-4"/>
    <property type="match status" value="1"/>
</dbReference>
<dbReference type="PANTHER" id="PTHR21058:SF0">
    <property type="entry name" value="6,7-DIMETHYL-8-RIBITYLLUMAZINE SYNTHASE"/>
    <property type="match status" value="1"/>
</dbReference>
<dbReference type="PANTHER" id="PTHR21058">
    <property type="entry name" value="6,7-DIMETHYL-8-RIBITYLLUMAZINE SYNTHASE DMRL SYNTHASE LUMAZINE SYNTHASE"/>
    <property type="match status" value="1"/>
</dbReference>
<dbReference type="Pfam" id="PF00885">
    <property type="entry name" value="DMRL_synthase"/>
    <property type="match status" value="1"/>
</dbReference>
<dbReference type="SUPFAM" id="SSF52121">
    <property type="entry name" value="Lumazine synthase"/>
    <property type="match status" value="1"/>
</dbReference>
<name>RISB_HAEI8</name>
<protein>
    <recommendedName>
        <fullName evidence="1">6,7-dimethyl-8-ribityllumazine synthase</fullName>
        <shortName evidence="1">DMRL synthase</shortName>
        <shortName evidence="1">LS</shortName>
        <shortName evidence="1">Lumazine synthase</shortName>
        <ecNumber evidence="1">2.5.1.78</ecNumber>
    </recommendedName>
</protein>
<sequence length="157" mass="16391">MKVLEGSVAAPNAKVAVAIARFNSFINESLLEGAIDALKRIGQVKDENITIVRTPGAYELPLVARRLAESKKFDAIVALGTVIRGGTAHFEYVAGEASSGLGKVAMDAEIPVAFGVLTTENIEQAIERAGTKAGNKGAEAALTALEMVNLIQQIDAA</sequence>
<reference key="1">
    <citation type="journal article" date="2005" name="J. Bacteriol.">
        <title>Genomic sequence of an otitis media isolate of nontypeable Haemophilus influenzae: comparative study with H. influenzae serotype d, strain KW20.</title>
        <authorList>
            <person name="Harrison A."/>
            <person name="Dyer D.W."/>
            <person name="Gillaspy A."/>
            <person name="Ray W.C."/>
            <person name="Mungur R."/>
            <person name="Carson M.B."/>
            <person name="Zhong H."/>
            <person name="Gipson J."/>
            <person name="Gipson M."/>
            <person name="Johnson L.S."/>
            <person name="Lewis L."/>
            <person name="Bakaletz L.O."/>
            <person name="Munson R.S. Jr."/>
        </authorList>
    </citation>
    <scope>NUCLEOTIDE SEQUENCE [LARGE SCALE GENOMIC DNA]</scope>
    <source>
        <strain>86-028NP</strain>
    </source>
</reference>
<accession>Q4QKN2</accession>
<gene>
    <name evidence="1" type="primary">ribH</name>
    <name type="ordered locus">NTHI1616</name>
</gene>
<evidence type="ECO:0000255" key="1">
    <source>
        <dbReference type="HAMAP-Rule" id="MF_00178"/>
    </source>
</evidence>
<feature type="chain" id="PRO_1000040427" description="6,7-dimethyl-8-ribityllumazine synthase">
    <location>
        <begin position="1"/>
        <end position="157"/>
    </location>
</feature>
<feature type="active site" description="Proton donor" evidence="1">
    <location>
        <position position="89"/>
    </location>
</feature>
<feature type="binding site" evidence="1">
    <location>
        <position position="22"/>
    </location>
    <ligand>
        <name>5-amino-6-(D-ribitylamino)uracil</name>
        <dbReference type="ChEBI" id="CHEBI:15934"/>
    </ligand>
</feature>
<feature type="binding site" evidence="1">
    <location>
        <begin position="57"/>
        <end position="59"/>
    </location>
    <ligand>
        <name>5-amino-6-(D-ribitylamino)uracil</name>
        <dbReference type="ChEBI" id="CHEBI:15934"/>
    </ligand>
</feature>
<feature type="binding site" evidence="1">
    <location>
        <begin position="81"/>
        <end position="83"/>
    </location>
    <ligand>
        <name>5-amino-6-(D-ribitylamino)uracil</name>
        <dbReference type="ChEBI" id="CHEBI:15934"/>
    </ligand>
</feature>
<feature type="binding site" evidence="1">
    <location>
        <begin position="86"/>
        <end position="87"/>
    </location>
    <ligand>
        <name>(2S)-2-hydroxy-3-oxobutyl phosphate</name>
        <dbReference type="ChEBI" id="CHEBI:58830"/>
    </ligand>
</feature>
<feature type="binding site" evidence="1">
    <location>
        <position position="114"/>
    </location>
    <ligand>
        <name>5-amino-6-(D-ribitylamino)uracil</name>
        <dbReference type="ChEBI" id="CHEBI:15934"/>
    </ligand>
</feature>
<feature type="binding site" evidence="1">
    <location>
        <position position="128"/>
    </location>
    <ligand>
        <name>(2S)-2-hydroxy-3-oxobutyl phosphate</name>
        <dbReference type="ChEBI" id="CHEBI:58830"/>
    </ligand>
</feature>
<organism>
    <name type="scientific">Haemophilus influenzae (strain 86-028NP)</name>
    <dbReference type="NCBI Taxonomy" id="281310"/>
    <lineage>
        <taxon>Bacteria</taxon>
        <taxon>Pseudomonadati</taxon>
        <taxon>Pseudomonadota</taxon>
        <taxon>Gammaproteobacteria</taxon>
        <taxon>Pasteurellales</taxon>
        <taxon>Pasteurellaceae</taxon>
        <taxon>Haemophilus</taxon>
    </lineage>
</organism>